<reference key="1">
    <citation type="journal article" date="2009" name="J. Mol. Biol.">
        <title>Characterization of two novel aldo-keto reductases from Arabidopsis: expression patterns, broad substrate specificity, and an open active-site structure suggest a role in toxicant metabolism following stress.</title>
        <authorList>
            <person name="Simpson P.J."/>
            <person name="Tantitadapitak C."/>
            <person name="Reed A.M."/>
            <person name="Mather O.C."/>
            <person name="Bunce C.M."/>
            <person name="White S.A."/>
            <person name="Ride J.P."/>
        </authorList>
    </citation>
    <scope>NUCLEOTIDE SEQUENCE [MRNA]</scope>
    <source>
        <strain>cv. Columbia</strain>
        <tissue>Flower bud</tissue>
    </source>
</reference>
<reference key="2">
    <citation type="journal article" date="2000" name="Nature">
        <title>Sequence and analysis of chromosome 3 of the plant Arabidopsis thaliana.</title>
        <authorList>
            <person name="Salanoubat M."/>
            <person name="Lemcke K."/>
            <person name="Rieger M."/>
            <person name="Ansorge W."/>
            <person name="Unseld M."/>
            <person name="Fartmann B."/>
            <person name="Valle G."/>
            <person name="Bloecker H."/>
            <person name="Perez-Alonso M."/>
            <person name="Obermaier B."/>
            <person name="Delseny M."/>
            <person name="Boutry M."/>
            <person name="Grivell L.A."/>
            <person name="Mache R."/>
            <person name="Puigdomenech P."/>
            <person name="De Simone V."/>
            <person name="Choisne N."/>
            <person name="Artiguenave F."/>
            <person name="Robert C."/>
            <person name="Brottier P."/>
            <person name="Wincker P."/>
            <person name="Cattolico L."/>
            <person name="Weissenbach J."/>
            <person name="Saurin W."/>
            <person name="Quetier F."/>
            <person name="Schaefer M."/>
            <person name="Mueller-Auer S."/>
            <person name="Gabel C."/>
            <person name="Fuchs M."/>
            <person name="Benes V."/>
            <person name="Wurmbach E."/>
            <person name="Drzonek H."/>
            <person name="Erfle H."/>
            <person name="Jordan N."/>
            <person name="Bangert S."/>
            <person name="Wiedelmann R."/>
            <person name="Kranz H."/>
            <person name="Voss H."/>
            <person name="Holland R."/>
            <person name="Brandt P."/>
            <person name="Nyakatura G."/>
            <person name="Vezzi A."/>
            <person name="D'Angelo M."/>
            <person name="Pallavicini A."/>
            <person name="Toppo S."/>
            <person name="Simionati B."/>
            <person name="Conrad A."/>
            <person name="Hornischer K."/>
            <person name="Kauer G."/>
            <person name="Loehnert T.-H."/>
            <person name="Nordsiek G."/>
            <person name="Reichelt J."/>
            <person name="Scharfe M."/>
            <person name="Schoen O."/>
            <person name="Bargues M."/>
            <person name="Terol J."/>
            <person name="Climent J."/>
            <person name="Navarro P."/>
            <person name="Collado C."/>
            <person name="Perez-Perez A."/>
            <person name="Ottenwaelder B."/>
            <person name="Duchemin D."/>
            <person name="Cooke R."/>
            <person name="Laudie M."/>
            <person name="Berger-Llauro C."/>
            <person name="Purnelle B."/>
            <person name="Masuy D."/>
            <person name="de Haan M."/>
            <person name="Maarse A.C."/>
            <person name="Alcaraz J.-P."/>
            <person name="Cottet A."/>
            <person name="Casacuberta E."/>
            <person name="Monfort A."/>
            <person name="Argiriou A."/>
            <person name="Flores M."/>
            <person name="Liguori R."/>
            <person name="Vitale D."/>
            <person name="Mannhaupt G."/>
            <person name="Haase D."/>
            <person name="Schoof H."/>
            <person name="Rudd S."/>
            <person name="Zaccaria P."/>
            <person name="Mewes H.-W."/>
            <person name="Mayer K.F.X."/>
            <person name="Kaul S."/>
            <person name="Town C.D."/>
            <person name="Koo H.L."/>
            <person name="Tallon L.J."/>
            <person name="Jenkins J."/>
            <person name="Rooney T."/>
            <person name="Rizzo M."/>
            <person name="Walts A."/>
            <person name="Utterback T."/>
            <person name="Fujii C.Y."/>
            <person name="Shea T.P."/>
            <person name="Creasy T.H."/>
            <person name="Haas B."/>
            <person name="Maiti R."/>
            <person name="Wu D."/>
            <person name="Peterson J."/>
            <person name="Van Aken S."/>
            <person name="Pai G."/>
            <person name="Militscher J."/>
            <person name="Sellers P."/>
            <person name="Gill J.E."/>
            <person name="Feldblyum T.V."/>
            <person name="Preuss D."/>
            <person name="Lin X."/>
            <person name="Nierman W.C."/>
            <person name="Salzberg S.L."/>
            <person name="White O."/>
            <person name="Venter J.C."/>
            <person name="Fraser C.M."/>
            <person name="Kaneko T."/>
            <person name="Nakamura Y."/>
            <person name="Sato S."/>
            <person name="Kato T."/>
            <person name="Asamizu E."/>
            <person name="Sasamoto S."/>
            <person name="Kimura T."/>
            <person name="Idesawa K."/>
            <person name="Kawashima K."/>
            <person name="Kishida Y."/>
            <person name="Kiyokawa C."/>
            <person name="Kohara M."/>
            <person name="Matsumoto M."/>
            <person name="Matsuno A."/>
            <person name="Muraki A."/>
            <person name="Nakayama S."/>
            <person name="Nakazaki N."/>
            <person name="Shinpo S."/>
            <person name="Takeuchi C."/>
            <person name="Wada T."/>
            <person name="Watanabe A."/>
            <person name="Yamada M."/>
            <person name="Yasuda M."/>
            <person name="Tabata S."/>
        </authorList>
    </citation>
    <scope>NUCLEOTIDE SEQUENCE [LARGE SCALE GENOMIC DNA]</scope>
    <source>
        <strain>cv. Columbia</strain>
    </source>
</reference>
<reference key="3">
    <citation type="journal article" date="2017" name="Plant J.">
        <title>Araport11: a complete reannotation of the Arabidopsis thaliana reference genome.</title>
        <authorList>
            <person name="Cheng C.Y."/>
            <person name="Krishnakumar V."/>
            <person name="Chan A.P."/>
            <person name="Thibaud-Nissen F."/>
            <person name="Schobel S."/>
            <person name="Town C.D."/>
        </authorList>
    </citation>
    <scope>GENOME REANNOTATION</scope>
    <source>
        <strain>cv. Columbia</strain>
    </source>
</reference>
<reference key="4">
    <citation type="submission" date="2002-03" db="EMBL/GenBank/DDBJ databases">
        <title>Full-length cDNA from Arabidopsis thaliana.</title>
        <authorList>
            <person name="Brover V.V."/>
            <person name="Troukhan M.E."/>
            <person name="Alexandrov N.A."/>
            <person name="Lu Y.-P."/>
            <person name="Flavell R.B."/>
            <person name="Feldmann K.A."/>
        </authorList>
    </citation>
    <scope>NUCLEOTIDE SEQUENCE [LARGE SCALE MRNA]</scope>
</reference>
<reference key="5">
    <citation type="journal article" date="2012" name="Mol. Cell. Proteomics">
        <title>Comparative large-scale characterisation of plant vs. mammal proteins reveals similar and idiosyncratic N-alpha acetylation features.</title>
        <authorList>
            <person name="Bienvenut W.V."/>
            <person name="Sumpton D."/>
            <person name="Martinez A."/>
            <person name="Lilla S."/>
            <person name="Espagne C."/>
            <person name="Meinnel T."/>
            <person name="Giglione C."/>
        </authorList>
    </citation>
    <scope>ACETYLATION [LARGE SCALE ANALYSIS] AT ALA-2</scope>
    <scope>CLEAVAGE OF INITIATOR METHIONINE [LARGE SCALE ANALYSIS]</scope>
    <scope>IDENTIFICATION BY MASS SPECTROMETRY [LARGE SCALE ANALYSIS]</scope>
</reference>
<comment type="function">
    <text evidence="1">Oxidoreductase that may act on a broad range of substrates such as ketosteroids, aldehydes, ketones and sugars.</text>
</comment>
<comment type="similarity">
    <text evidence="3">Belongs to the aldo/keto reductase family.</text>
</comment>
<protein>
    <recommendedName>
        <fullName>Aldo-keto reductase family 4 member C11</fullName>
        <ecNumber>1.1.1.-</ecNumber>
    </recommendedName>
</protein>
<proteinExistence type="evidence at protein level"/>
<sequence length="315" mass="35036">MADEIGFFQLNTGAKIPSVGLGTWQAAPGVVGDAVAAAVKIGYQHIDCASRYGNEIEIGKVLKKLFDDGVVKREKLFITSKIWLTDLDPPDVQDALNRTLQDLQLDYVDLYLMHWPVRLKKGTVDFKPENIMPIDIPSTWKAMEALVDSGKARAIGVSNFSTKKLSDLVEAARVPPAVNQVECHPSWQQHKLHEFCKSKGIHLSGYSPLGSPGTTWVKADVLKSPVIEMIAKEIGKSPAQTALRWGLQMGHSILPKSTNEGRIRENFDVLGWSIPKEMFDKFSKIEQARLVQGTSFVHETLSPYKTLEELWDGEI</sequence>
<organism>
    <name type="scientific">Arabidopsis thaliana</name>
    <name type="common">Mouse-ear cress</name>
    <dbReference type="NCBI Taxonomy" id="3702"/>
    <lineage>
        <taxon>Eukaryota</taxon>
        <taxon>Viridiplantae</taxon>
        <taxon>Streptophyta</taxon>
        <taxon>Embryophyta</taxon>
        <taxon>Tracheophyta</taxon>
        <taxon>Spermatophyta</taxon>
        <taxon>Magnoliopsida</taxon>
        <taxon>eudicotyledons</taxon>
        <taxon>Gunneridae</taxon>
        <taxon>Pentapetalae</taxon>
        <taxon>rosids</taxon>
        <taxon>malvids</taxon>
        <taxon>Brassicales</taxon>
        <taxon>Brassicaceae</taxon>
        <taxon>Camelineae</taxon>
        <taxon>Arabidopsis</taxon>
    </lineage>
</organism>
<accession>Q9M338</accession>
<gene>
    <name type="primary">AKR4C11</name>
    <name type="ordered locus">At3g53880</name>
    <name type="ORF">F5K20.180</name>
</gene>
<dbReference type="EC" id="1.1.1.-"/>
<dbReference type="EMBL" id="DQ837656">
    <property type="protein sequence ID" value="ABH07517.1"/>
    <property type="molecule type" value="mRNA"/>
</dbReference>
<dbReference type="EMBL" id="AL132960">
    <property type="protein sequence ID" value="CAB88350.1"/>
    <property type="molecule type" value="Genomic_DNA"/>
</dbReference>
<dbReference type="EMBL" id="CP002686">
    <property type="protein sequence ID" value="AEE79153.1"/>
    <property type="molecule type" value="Genomic_DNA"/>
</dbReference>
<dbReference type="EMBL" id="AY084865">
    <property type="protein sequence ID" value="AAM61428.1"/>
    <property type="molecule type" value="mRNA"/>
</dbReference>
<dbReference type="PIR" id="T45928">
    <property type="entry name" value="T45928"/>
</dbReference>
<dbReference type="RefSeq" id="NP_190956.1">
    <property type="nucleotide sequence ID" value="NM_115248.2"/>
</dbReference>
<dbReference type="SMR" id="Q9M338"/>
<dbReference type="BioGRID" id="9872">
    <property type="interactions" value="1"/>
</dbReference>
<dbReference type="FunCoup" id="Q9M338">
    <property type="interactions" value="2510"/>
</dbReference>
<dbReference type="IntAct" id="Q9M338">
    <property type="interactions" value="1"/>
</dbReference>
<dbReference type="STRING" id="3702.Q9M338"/>
<dbReference type="iPTMnet" id="Q9M338"/>
<dbReference type="PaxDb" id="3702-AT3G53880.1"/>
<dbReference type="ProteomicsDB" id="245062"/>
<dbReference type="EnsemblPlants" id="AT3G53880.1">
    <property type="protein sequence ID" value="AT3G53880.1"/>
    <property type="gene ID" value="AT3G53880"/>
</dbReference>
<dbReference type="GeneID" id="824555"/>
<dbReference type="Gramene" id="AT3G53880.1">
    <property type="protein sequence ID" value="AT3G53880.1"/>
    <property type="gene ID" value="AT3G53880"/>
</dbReference>
<dbReference type="KEGG" id="ath:AT3G53880"/>
<dbReference type="Araport" id="AT3G53880"/>
<dbReference type="TAIR" id="AT3G53880">
    <property type="gene designation" value="AKR4C11"/>
</dbReference>
<dbReference type="eggNOG" id="KOG1577">
    <property type="taxonomic scope" value="Eukaryota"/>
</dbReference>
<dbReference type="HOGENOM" id="CLU_023205_0_0_1"/>
<dbReference type="InParanoid" id="Q9M338"/>
<dbReference type="OMA" id="FENDECA"/>
<dbReference type="OrthoDB" id="416253at2759"/>
<dbReference type="PhylomeDB" id="Q9M338"/>
<dbReference type="BioCyc" id="ARA:AT3G53880-MONOMER"/>
<dbReference type="PRO" id="PR:Q9M338"/>
<dbReference type="Proteomes" id="UP000006548">
    <property type="component" value="Chromosome 3"/>
</dbReference>
<dbReference type="ExpressionAtlas" id="Q9M338">
    <property type="expression patterns" value="baseline and differential"/>
</dbReference>
<dbReference type="GO" id="GO:0005829">
    <property type="term" value="C:cytosol"/>
    <property type="evidence" value="ECO:0007005"/>
    <property type="project" value="TAIR"/>
</dbReference>
<dbReference type="GO" id="GO:0016491">
    <property type="term" value="F:oxidoreductase activity"/>
    <property type="evidence" value="ECO:0007669"/>
    <property type="project" value="UniProtKB-KW"/>
</dbReference>
<dbReference type="CDD" id="cd19125">
    <property type="entry name" value="AKR_AKR4C1-15"/>
    <property type="match status" value="1"/>
</dbReference>
<dbReference type="FunFam" id="3.20.20.100:FF:000010">
    <property type="entry name" value="NADPH-dependent aldo-keto reductase, chloroplastic"/>
    <property type="match status" value="1"/>
</dbReference>
<dbReference type="Gene3D" id="3.20.20.100">
    <property type="entry name" value="NADP-dependent oxidoreductase domain"/>
    <property type="match status" value="1"/>
</dbReference>
<dbReference type="InterPro" id="IPR020471">
    <property type="entry name" value="AKR"/>
</dbReference>
<dbReference type="InterPro" id="IPR044498">
    <property type="entry name" value="AKR4C"/>
</dbReference>
<dbReference type="InterPro" id="IPR018170">
    <property type="entry name" value="Aldo/ket_reductase_CS"/>
</dbReference>
<dbReference type="InterPro" id="IPR023210">
    <property type="entry name" value="NADP_OxRdtase_dom"/>
</dbReference>
<dbReference type="InterPro" id="IPR036812">
    <property type="entry name" value="NADP_OxRdtase_dom_sf"/>
</dbReference>
<dbReference type="PANTHER" id="PTHR11732">
    <property type="entry name" value="ALDO/KETO REDUCTASE"/>
    <property type="match status" value="1"/>
</dbReference>
<dbReference type="Pfam" id="PF00248">
    <property type="entry name" value="Aldo_ket_red"/>
    <property type="match status" value="1"/>
</dbReference>
<dbReference type="PIRSF" id="PIRSF000097">
    <property type="entry name" value="AKR"/>
    <property type="match status" value="1"/>
</dbReference>
<dbReference type="PRINTS" id="PR00069">
    <property type="entry name" value="ALDKETRDTASE"/>
</dbReference>
<dbReference type="SUPFAM" id="SSF51430">
    <property type="entry name" value="NAD(P)-linked oxidoreductase"/>
    <property type="match status" value="1"/>
</dbReference>
<dbReference type="PROSITE" id="PS00062">
    <property type="entry name" value="ALDOKETO_REDUCTASE_2"/>
    <property type="match status" value="1"/>
</dbReference>
<dbReference type="PROSITE" id="PS00063">
    <property type="entry name" value="ALDOKETO_REDUCTASE_3"/>
    <property type="match status" value="1"/>
</dbReference>
<evidence type="ECO:0000250" key="1"/>
<evidence type="ECO:0000250" key="2">
    <source>
        <dbReference type="UniProtKB" id="Q84TF0"/>
    </source>
</evidence>
<evidence type="ECO:0000305" key="3"/>
<evidence type="ECO:0007744" key="4">
    <source>
    </source>
</evidence>
<keyword id="KW-0007">Acetylation</keyword>
<keyword id="KW-0521">NADP</keyword>
<keyword id="KW-0560">Oxidoreductase</keyword>
<keyword id="KW-0597">Phosphoprotein</keyword>
<keyword id="KW-1185">Reference proteome</keyword>
<feature type="initiator methionine" description="Removed" evidence="4">
    <location>
        <position position="1"/>
    </location>
</feature>
<feature type="chain" id="PRO_0000400315" description="Aldo-keto reductase family 4 member C11">
    <location>
        <begin position="2"/>
        <end position="315"/>
    </location>
</feature>
<feature type="active site" description="Proton donor" evidence="1">
    <location>
        <position position="52"/>
    </location>
</feature>
<feature type="binding site" evidence="1">
    <location>
        <begin position="23"/>
        <end position="24"/>
    </location>
    <ligand>
        <name>NADP(+)</name>
        <dbReference type="ChEBI" id="CHEBI:58349"/>
    </ligand>
</feature>
<feature type="binding site" evidence="1">
    <location>
        <position position="47"/>
    </location>
    <ligand>
        <name>NADP(+)</name>
        <dbReference type="ChEBI" id="CHEBI:58349"/>
    </ligand>
</feature>
<feature type="binding site" evidence="1">
    <location>
        <position position="114"/>
    </location>
    <ligand>
        <name>NADP(+)</name>
        <dbReference type="ChEBI" id="CHEBI:58349"/>
    </ligand>
</feature>
<feature type="binding site" evidence="1">
    <location>
        <begin position="158"/>
        <end position="159"/>
    </location>
    <ligand>
        <name>NADP(+)</name>
        <dbReference type="ChEBI" id="CHEBI:58349"/>
    </ligand>
</feature>
<feature type="binding site" evidence="1">
    <location>
        <position position="180"/>
    </location>
    <ligand>
        <name>NADP(+)</name>
        <dbReference type="ChEBI" id="CHEBI:58349"/>
    </ligand>
</feature>
<feature type="binding site" evidence="1">
    <location>
        <begin position="207"/>
        <end position="213"/>
    </location>
    <ligand>
        <name>NADP(+)</name>
        <dbReference type="ChEBI" id="CHEBI:58349"/>
    </ligand>
</feature>
<feature type="binding site" evidence="1">
    <location>
        <begin position="256"/>
        <end position="258"/>
    </location>
    <ligand>
        <name>NADP(+)</name>
        <dbReference type="ChEBI" id="CHEBI:58349"/>
    </ligand>
</feature>
<feature type="binding site" evidence="1">
    <location>
        <begin position="262"/>
        <end position="266"/>
    </location>
    <ligand>
        <name>NADP(+)</name>
        <dbReference type="ChEBI" id="CHEBI:58349"/>
    </ligand>
</feature>
<feature type="modified residue" description="N-acetylalanine" evidence="4">
    <location>
        <position position="2"/>
    </location>
</feature>
<feature type="modified residue" description="Phosphoserine" evidence="2">
    <location>
        <position position="295"/>
    </location>
</feature>
<name>AKRCB_ARATH</name>